<comment type="function">
    <text evidence="1">The RecF protein is involved in DNA metabolism; it is required for DNA replication and normal SOS inducibility. RecF binds preferentially to single-stranded, linear DNA. It also seems to bind ATP.</text>
</comment>
<comment type="subcellular location">
    <subcellularLocation>
        <location evidence="1">Cytoplasm</location>
    </subcellularLocation>
</comment>
<comment type="similarity">
    <text evidence="1">Belongs to the RecF family.</text>
</comment>
<gene>
    <name evidence="1" type="primary">recF</name>
    <name type="ordered locus">ECS88_4123</name>
</gene>
<organism>
    <name type="scientific">Escherichia coli O45:K1 (strain S88 / ExPEC)</name>
    <dbReference type="NCBI Taxonomy" id="585035"/>
    <lineage>
        <taxon>Bacteria</taxon>
        <taxon>Pseudomonadati</taxon>
        <taxon>Pseudomonadota</taxon>
        <taxon>Gammaproteobacteria</taxon>
        <taxon>Enterobacterales</taxon>
        <taxon>Enterobacteriaceae</taxon>
        <taxon>Escherichia</taxon>
    </lineage>
</organism>
<keyword id="KW-0067">ATP-binding</keyword>
<keyword id="KW-0963">Cytoplasm</keyword>
<keyword id="KW-0227">DNA damage</keyword>
<keyword id="KW-0234">DNA repair</keyword>
<keyword id="KW-0235">DNA replication</keyword>
<keyword id="KW-0238">DNA-binding</keyword>
<keyword id="KW-0547">Nucleotide-binding</keyword>
<keyword id="KW-1185">Reference proteome</keyword>
<keyword id="KW-0742">SOS response</keyword>
<accession>B7MGC1</accession>
<reference key="1">
    <citation type="journal article" date="2009" name="PLoS Genet.">
        <title>Organised genome dynamics in the Escherichia coli species results in highly diverse adaptive paths.</title>
        <authorList>
            <person name="Touchon M."/>
            <person name="Hoede C."/>
            <person name="Tenaillon O."/>
            <person name="Barbe V."/>
            <person name="Baeriswyl S."/>
            <person name="Bidet P."/>
            <person name="Bingen E."/>
            <person name="Bonacorsi S."/>
            <person name="Bouchier C."/>
            <person name="Bouvet O."/>
            <person name="Calteau A."/>
            <person name="Chiapello H."/>
            <person name="Clermont O."/>
            <person name="Cruveiller S."/>
            <person name="Danchin A."/>
            <person name="Diard M."/>
            <person name="Dossat C."/>
            <person name="Karoui M.E."/>
            <person name="Frapy E."/>
            <person name="Garry L."/>
            <person name="Ghigo J.M."/>
            <person name="Gilles A.M."/>
            <person name="Johnson J."/>
            <person name="Le Bouguenec C."/>
            <person name="Lescat M."/>
            <person name="Mangenot S."/>
            <person name="Martinez-Jehanne V."/>
            <person name="Matic I."/>
            <person name="Nassif X."/>
            <person name="Oztas S."/>
            <person name="Petit M.A."/>
            <person name="Pichon C."/>
            <person name="Rouy Z."/>
            <person name="Ruf C.S."/>
            <person name="Schneider D."/>
            <person name="Tourret J."/>
            <person name="Vacherie B."/>
            <person name="Vallenet D."/>
            <person name="Medigue C."/>
            <person name="Rocha E.P.C."/>
            <person name="Denamur E."/>
        </authorList>
    </citation>
    <scope>NUCLEOTIDE SEQUENCE [LARGE SCALE GENOMIC DNA]</scope>
    <source>
        <strain>S88 / ExPEC</strain>
    </source>
</reference>
<name>RECF_ECO45</name>
<protein>
    <recommendedName>
        <fullName evidence="1">DNA replication and repair protein RecF</fullName>
    </recommendedName>
</protein>
<sequence>MSLTRLLIRDFRNIETADLALSPGFNFLVGANGSGKTSVLEAIYTLGHGRAFRSLQIGRVIRHEQEAFVLHGRLQGEERETAIGLTKDKQGDSKVRIDGTDGHKVAELAHLMPMQLITPEGFTLLNGGPKYRRAFLDWGCFHNEPGFFTAWSNLKRLLKQRNAALRQVTRYEQLRPWDKELIPLAEQISTWRAEYSAGIAADMADTCKQFLPEFSLTFSFQRGWEKETEYAEVLERNFERDRQLTYTAHGPHKADLRIRADGAPVEDTLSRGQLKLLMCALRLAQGEFLTRESGRRCLYLIDDFASELDDERRGLLASRLKATQSQVFVSAISAEHVIDMSDENSKMFTVEKGKITD</sequence>
<feature type="chain" id="PRO_1000121108" description="DNA replication and repair protein RecF">
    <location>
        <begin position="1"/>
        <end position="357"/>
    </location>
</feature>
<feature type="binding site" evidence="1">
    <location>
        <begin position="30"/>
        <end position="37"/>
    </location>
    <ligand>
        <name>ATP</name>
        <dbReference type="ChEBI" id="CHEBI:30616"/>
    </ligand>
</feature>
<dbReference type="EMBL" id="CU928161">
    <property type="protein sequence ID" value="CAR05329.1"/>
    <property type="molecule type" value="Genomic_DNA"/>
</dbReference>
<dbReference type="RefSeq" id="WP_000060112.1">
    <property type="nucleotide sequence ID" value="NC_011742.1"/>
</dbReference>
<dbReference type="SMR" id="B7MGC1"/>
<dbReference type="GeneID" id="93778441"/>
<dbReference type="KEGG" id="ecz:ECS88_4123"/>
<dbReference type="HOGENOM" id="CLU_040267_0_0_6"/>
<dbReference type="Proteomes" id="UP000000747">
    <property type="component" value="Chromosome"/>
</dbReference>
<dbReference type="GO" id="GO:0005737">
    <property type="term" value="C:cytoplasm"/>
    <property type="evidence" value="ECO:0007669"/>
    <property type="project" value="UniProtKB-SubCell"/>
</dbReference>
<dbReference type="GO" id="GO:0005524">
    <property type="term" value="F:ATP binding"/>
    <property type="evidence" value="ECO:0007669"/>
    <property type="project" value="UniProtKB-UniRule"/>
</dbReference>
<dbReference type="GO" id="GO:0003697">
    <property type="term" value="F:single-stranded DNA binding"/>
    <property type="evidence" value="ECO:0007669"/>
    <property type="project" value="UniProtKB-UniRule"/>
</dbReference>
<dbReference type="GO" id="GO:0006260">
    <property type="term" value="P:DNA replication"/>
    <property type="evidence" value="ECO:0007669"/>
    <property type="project" value="UniProtKB-UniRule"/>
</dbReference>
<dbReference type="GO" id="GO:0000731">
    <property type="term" value="P:DNA synthesis involved in DNA repair"/>
    <property type="evidence" value="ECO:0007669"/>
    <property type="project" value="TreeGrafter"/>
</dbReference>
<dbReference type="GO" id="GO:0006302">
    <property type="term" value="P:double-strand break repair"/>
    <property type="evidence" value="ECO:0007669"/>
    <property type="project" value="TreeGrafter"/>
</dbReference>
<dbReference type="GO" id="GO:0009432">
    <property type="term" value="P:SOS response"/>
    <property type="evidence" value="ECO:0007669"/>
    <property type="project" value="UniProtKB-UniRule"/>
</dbReference>
<dbReference type="FunFam" id="1.20.1050.90:FF:000001">
    <property type="entry name" value="DNA replication and repair protein RecF"/>
    <property type="match status" value="1"/>
</dbReference>
<dbReference type="Gene3D" id="3.40.50.300">
    <property type="entry name" value="P-loop containing nucleotide triphosphate hydrolases"/>
    <property type="match status" value="1"/>
</dbReference>
<dbReference type="Gene3D" id="1.20.1050.90">
    <property type="entry name" value="RecF/RecN/SMC, N-terminal domain"/>
    <property type="match status" value="1"/>
</dbReference>
<dbReference type="HAMAP" id="MF_00365">
    <property type="entry name" value="RecF"/>
    <property type="match status" value="1"/>
</dbReference>
<dbReference type="InterPro" id="IPR001238">
    <property type="entry name" value="DNA-binding_RecF"/>
</dbReference>
<dbReference type="InterPro" id="IPR018078">
    <property type="entry name" value="DNA-binding_RecF_CS"/>
</dbReference>
<dbReference type="InterPro" id="IPR027417">
    <property type="entry name" value="P-loop_NTPase"/>
</dbReference>
<dbReference type="InterPro" id="IPR003395">
    <property type="entry name" value="RecF/RecN/SMC_N"/>
</dbReference>
<dbReference type="InterPro" id="IPR042174">
    <property type="entry name" value="RecF_2"/>
</dbReference>
<dbReference type="NCBIfam" id="TIGR00611">
    <property type="entry name" value="recf"/>
    <property type="match status" value="1"/>
</dbReference>
<dbReference type="PANTHER" id="PTHR32182">
    <property type="entry name" value="DNA REPLICATION AND REPAIR PROTEIN RECF"/>
    <property type="match status" value="1"/>
</dbReference>
<dbReference type="PANTHER" id="PTHR32182:SF0">
    <property type="entry name" value="DNA REPLICATION AND REPAIR PROTEIN RECF"/>
    <property type="match status" value="1"/>
</dbReference>
<dbReference type="Pfam" id="PF02463">
    <property type="entry name" value="SMC_N"/>
    <property type="match status" value="1"/>
</dbReference>
<dbReference type="SUPFAM" id="SSF52540">
    <property type="entry name" value="P-loop containing nucleoside triphosphate hydrolases"/>
    <property type="match status" value="1"/>
</dbReference>
<dbReference type="PROSITE" id="PS00617">
    <property type="entry name" value="RECF_1"/>
    <property type="match status" value="1"/>
</dbReference>
<dbReference type="PROSITE" id="PS00618">
    <property type="entry name" value="RECF_2"/>
    <property type="match status" value="1"/>
</dbReference>
<proteinExistence type="inferred from homology"/>
<evidence type="ECO:0000255" key="1">
    <source>
        <dbReference type="HAMAP-Rule" id="MF_00365"/>
    </source>
</evidence>